<sequence>MLILDRILGQASDPALADRLHDLSHAGQVETLSLSGSDIQRHRLRLASDRGTDCAIRLERHQQLRNGSVLMLDSQRAIVVQMQDQQYLDLQPRDAAAALELGYFAGNMHWAVRFAGDTLQILLNGPEADYLERLAPMLADGRVQRA</sequence>
<evidence type="ECO:0000255" key="1">
    <source>
        <dbReference type="HAMAP-Rule" id="MF_00822"/>
    </source>
</evidence>
<name>UREE1_PSEU2</name>
<proteinExistence type="inferred from homology"/>
<accession>Q4ZUC9</accession>
<keyword id="KW-0143">Chaperone</keyword>
<keyword id="KW-0963">Cytoplasm</keyword>
<keyword id="KW-0533">Nickel</keyword>
<keyword id="KW-0996">Nickel insertion</keyword>
<gene>
    <name evidence="1" type="primary">ureE1</name>
    <name type="ordered locus">Psyr_2200</name>
</gene>
<protein>
    <recommendedName>
        <fullName evidence="1">Urease accessory protein UreE 1</fullName>
    </recommendedName>
</protein>
<feature type="chain" id="PRO_0000223425" description="Urease accessory protein UreE 1">
    <location>
        <begin position="1"/>
        <end position="146"/>
    </location>
</feature>
<dbReference type="EMBL" id="CP000075">
    <property type="protein sequence ID" value="AAY37243.1"/>
    <property type="molecule type" value="Genomic_DNA"/>
</dbReference>
<dbReference type="RefSeq" id="WP_011267500.1">
    <property type="nucleotide sequence ID" value="NC_007005.1"/>
</dbReference>
<dbReference type="RefSeq" id="YP_235281.1">
    <property type="nucleotide sequence ID" value="NC_007005.1"/>
</dbReference>
<dbReference type="SMR" id="Q4ZUC9"/>
<dbReference type="STRING" id="205918.Psyr_2200"/>
<dbReference type="KEGG" id="psb:Psyr_2200"/>
<dbReference type="PATRIC" id="fig|205918.7.peg.2251"/>
<dbReference type="eggNOG" id="COG2371">
    <property type="taxonomic scope" value="Bacteria"/>
</dbReference>
<dbReference type="HOGENOM" id="CLU_127517_0_0_6"/>
<dbReference type="OrthoDB" id="7376380at2"/>
<dbReference type="Proteomes" id="UP000000426">
    <property type="component" value="Chromosome"/>
</dbReference>
<dbReference type="GO" id="GO:0005737">
    <property type="term" value="C:cytoplasm"/>
    <property type="evidence" value="ECO:0007669"/>
    <property type="project" value="UniProtKB-SubCell"/>
</dbReference>
<dbReference type="GO" id="GO:0016151">
    <property type="term" value="F:nickel cation binding"/>
    <property type="evidence" value="ECO:0007669"/>
    <property type="project" value="UniProtKB-UniRule"/>
</dbReference>
<dbReference type="GO" id="GO:0051082">
    <property type="term" value="F:unfolded protein binding"/>
    <property type="evidence" value="ECO:0007669"/>
    <property type="project" value="UniProtKB-UniRule"/>
</dbReference>
<dbReference type="GO" id="GO:0006457">
    <property type="term" value="P:protein folding"/>
    <property type="evidence" value="ECO:0007669"/>
    <property type="project" value="InterPro"/>
</dbReference>
<dbReference type="CDD" id="cd00571">
    <property type="entry name" value="UreE"/>
    <property type="match status" value="1"/>
</dbReference>
<dbReference type="Gene3D" id="2.60.260.20">
    <property type="entry name" value="Urease metallochaperone UreE, N-terminal domain"/>
    <property type="match status" value="1"/>
</dbReference>
<dbReference type="HAMAP" id="MF_00822">
    <property type="entry name" value="UreE"/>
    <property type="match status" value="1"/>
</dbReference>
<dbReference type="InterPro" id="IPR012406">
    <property type="entry name" value="UreE"/>
</dbReference>
<dbReference type="InterPro" id="IPR004029">
    <property type="entry name" value="UreE_N"/>
</dbReference>
<dbReference type="InterPro" id="IPR036118">
    <property type="entry name" value="UreE_N_sf"/>
</dbReference>
<dbReference type="NCBIfam" id="NF009752">
    <property type="entry name" value="PRK13261.1-2"/>
    <property type="match status" value="1"/>
</dbReference>
<dbReference type="Pfam" id="PF02814">
    <property type="entry name" value="UreE_N"/>
    <property type="match status" value="1"/>
</dbReference>
<dbReference type="PIRSF" id="PIRSF036402">
    <property type="entry name" value="Ureas_acces_UreE"/>
    <property type="match status" value="1"/>
</dbReference>
<dbReference type="SMART" id="SM00988">
    <property type="entry name" value="UreE_N"/>
    <property type="match status" value="1"/>
</dbReference>
<dbReference type="SUPFAM" id="SSF69287">
    <property type="entry name" value="Urease metallochaperone UreE, N-terminal domain"/>
    <property type="match status" value="1"/>
</dbReference>
<comment type="function">
    <text evidence="1">Involved in urease metallocenter assembly. Binds nickel. Probably functions as a nickel donor during metallocenter assembly.</text>
</comment>
<comment type="subcellular location">
    <subcellularLocation>
        <location evidence="1">Cytoplasm</location>
    </subcellularLocation>
</comment>
<comment type="similarity">
    <text evidence="1">Belongs to the UreE family.</text>
</comment>
<organism>
    <name type="scientific">Pseudomonas syringae pv. syringae (strain B728a)</name>
    <dbReference type="NCBI Taxonomy" id="205918"/>
    <lineage>
        <taxon>Bacteria</taxon>
        <taxon>Pseudomonadati</taxon>
        <taxon>Pseudomonadota</taxon>
        <taxon>Gammaproteobacteria</taxon>
        <taxon>Pseudomonadales</taxon>
        <taxon>Pseudomonadaceae</taxon>
        <taxon>Pseudomonas</taxon>
        <taxon>Pseudomonas syringae</taxon>
    </lineage>
</organism>
<reference key="1">
    <citation type="journal article" date="2005" name="Proc. Natl. Acad. Sci. U.S.A.">
        <title>Comparison of the complete genome sequences of Pseudomonas syringae pv. syringae B728a and pv. tomato DC3000.</title>
        <authorList>
            <person name="Feil H."/>
            <person name="Feil W.S."/>
            <person name="Chain P."/>
            <person name="Larimer F."/>
            <person name="Dibartolo G."/>
            <person name="Copeland A."/>
            <person name="Lykidis A."/>
            <person name="Trong S."/>
            <person name="Nolan M."/>
            <person name="Goltsman E."/>
            <person name="Thiel J."/>
            <person name="Malfatti S."/>
            <person name="Loper J.E."/>
            <person name="Lapidus A."/>
            <person name="Detter J.C."/>
            <person name="Land M."/>
            <person name="Richardson P.M."/>
            <person name="Kyrpides N.C."/>
            <person name="Ivanova N."/>
            <person name="Lindow S.E."/>
        </authorList>
    </citation>
    <scope>NUCLEOTIDE SEQUENCE [LARGE SCALE GENOMIC DNA]</scope>
    <source>
        <strain>B728a</strain>
    </source>
</reference>